<proteinExistence type="evidence at protein level"/>
<reference key="1">
    <citation type="journal article" date="2000" name="Plant Physiol.">
        <title>Mutation of Arabidopsis plastid phosphoglucose isomerase affects leaf starch synthesis and floral initiation.</title>
        <authorList>
            <person name="Yu T.-S."/>
            <person name="Lue W.-L."/>
            <person name="Wang S.-M."/>
            <person name="Chen J."/>
        </authorList>
    </citation>
    <scope>NUCLEOTIDE SEQUENCE [GENOMIC DNA]</scope>
    <scope>FUNCTION</scope>
    <scope>MUTAGENESIS OF SER-166</scope>
</reference>
<reference key="2">
    <citation type="journal article" date="1999" name="Nature">
        <title>Sequence and analysis of chromosome 4 of the plant Arabidopsis thaliana.</title>
        <authorList>
            <person name="Mayer K.F.X."/>
            <person name="Schueller C."/>
            <person name="Wambutt R."/>
            <person name="Murphy G."/>
            <person name="Volckaert G."/>
            <person name="Pohl T."/>
            <person name="Duesterhoeft A."/>
            <person name="Stiekema W."/>
            <person name="Entian K.-D."/>
            <person name="Terryn N."/>
            <person name="Harris B."/>
            <person name="Ansorge W."/>
            <person name="Brandt P."/>
            <person name="Grivell L.A."/>
            <person name="Rieger M."/>
            <person name="Weichselgartner M."/>
            <person name="de Simone V."/>
            <person name="Obermaier B."/>
            <person name="Mache R."/>
            <person name="Mueller M."/>
            <person name="Kreis M."/>
            <person name="Delseny M."/>
            <person name="Puigdomenech P."/>
            <person name="Watson M."/>
            <person name="Schmidtheini T."/>
            <person name="Reichert B."/>
            <person name="Portetelle D."/>
            <person name="Perez-Alonso M."/>
            <person name="Boutry M."/>
            <person name="Bancroft I."/>
            <person name="Vos P."/>
            <person name="Hoheisel J."/>
            <person name="Zimmermann W."/>
            <person name="Wedler H."/>
            <person name="Ridley P."/>
            <person name="Langham S.-A."/>
            <person name="McCullagh B."/>
            <person name="Bilham L."/>
            <person name="Robben J."/>
            <person name="van der Schueren J."/>
            <person name="Grymonprez B."/>
            <person name="Chuang Y.-J."/>
            <person name="Vandenbussche F."/>
            <person name="Braeken M."/>
            <person name="Weltjens I."/>
            <person name="Voet M."/>
            <person name="Bastiaens I."/>
            <person name="Aert R."/>
            <person name="Defoor E."/>
            <person name="Weitzenegger T."/>
            <person name="Bothe G."/>
            <person name="Ramsperger U."/>
            <person name="Hilbert H."/>
            <person name="Braun M."/>
            <person name="Holzer E."/>
            <person name="Brandt A."/>
            <person name="Peters S."/>
            <person name="van Staveren M."/>
            <person name="Dirkse W."/>
            <person name="Mooijman P."/>
            <person name="Klein Lankhorst R."/>
            <person name="Rose M."/>
            <person name="Hauf J."/>
            <person name="Koetter P."/>
            <person name="Berneiser S."/>
            <person name="Hempel S."/>
            <person name="Feldpausch M."/>
            <person name="Lamberth S."/>
            <person name="Van den Daele H."/>
            <person name="De Keyser A."/>
            <person name="Buysshaert C."/>
            <person name="Gielen J."/>
            <person name="Villarroel R."/>
            <person name="De Clercq R."/>
            <person name="van Montagu M."/>
            <person name="Rogers J."/>
            <person name="Cronin A."/>
            <person name="Quail M.A."/>
            <person name="Bray-Allen S."/>
            <person name="Clark L."/>
            <person name="Doggett J."/>
            <person name="Hall S."/>
            <person name="Kay M."/>
            <person name="Lennard N."/>
            <person name="McLay K."/>
            <person name="Mayes R."/>
            <person name="Pettett A."/>
            <person name="Rajandream M.A."/>
            <person name="Lyne M."/>
            <person name="Benes V."/>
            <person name="Rechmann S."/>
            <person name="Borkova D."/>
            <person name="Bloecker H."/>
            <person name="Scharfe M."/>
            <person name="Grimm M."/>
            <person name="Loehnert T.-H."/>
            <person name="Dose S."/>
            <person name="de Haan M."/>
            <person name="Maarse A.C."/>
            <person name="Schaefer M."/>
            <person name="Mueller-Auer S."/>
            <person name="Gabel C."/>
            <person name="Fuchs M."/>
            <person name="Fartmann B."/>
            <person name="Granderath K."/>
            <person name="Dauner D."/>
            <person name="Herzl A."/>
            <person name="Neumann S."/>
            <person name="Argiriou A."/>
            <person name="Vitale D."/>
            <person name="Liguori R."/>
            <person name="Piravandi E."/>
            <person name="Massenet O."/>
            <person name="Quigley F."/>
            <person name="Clabauld G."/>
            <person name="Muendlein A."/>
            <person name="Felber R."/>
            <person name="Schnabl S."/>
            <person name="Hiller R."/>
            <person name="Schmidt W."/>
            <person name="Lecharny A."/>
            <person name="Aubourg S."/>
            <person name="Chefdor F."/>
            <person name="Cooke R."/>
            <person name="Berger C."/>
            <person name="Monfort A."/>
            <person name="Casacuberta E."/>
            <person name="Gibbons T."/>
            <person name="Weber N."/>
            <person name="Vandenbol M."/>
            <person name="Bargues M."/>
            <person name="Terol J."/>
            <person name="Torres A."/>
            <person name="Perez-Perez A."/>
            <person name="Purnelle B."/>
            <person name="Bent E."/>
            <person name="Johnson S."/>
            <person name="Tacon D."/>
            <person name="Jesse T."/>
            <person name="Heijnen L."/>
            <person name="Schwarz S."/>
            <person name="Scholler P."/>
            <person name="Heber S."/>
            <person name="Francs P."/>
            <person name="Bielke C."/>
            <person name="Frishman D."/>
            <person name="Haase D."/>
            <person name="Lemcke K."/>
            <person name="Mewes H.-W."/>
            <person name="Stocker S."/>
            <person name="Zaccaria P."/>
            <person name="Bevan M."/>
            <person name="Wilson R.K."/>
            <person name="de la Bastide M."/>
            <person name="Habermann K."/>
            <person name="Parnell L."/>
            <person name="Dedhia N."/>
            <person name="Gnoj L."/>
            <person name="Schutz K."/>
            <person name="Huang E."/>
            <person name="Spiegel L."/>
            <person name="Sekhon M."/>
            <person name="Murray J."/>
            <person name="Sheet P."/>
            <person name="Cordes M."/>
            <person name="Abu-Threideh J."/>
            <person name="Stoneking T."/>
            <person name="Kalicki J."/>
            <person name="Graves T."/>
            <person name="Harmon G."/>
            <person name="Edwards J."/>
            <person name="Latreille P."/>
            <person name="Courtney L."/>
            <person name="Cloud J."/>
            <person name="Abbott A."/>
            <person name="Scott K."/>
            <person name="Johnson D."/>
            <person name="Minx P."/>
            <person name="Bentley D."/>
            <person name="Fulton B."/>
            <person name="Miller N."/>
            <person name="Greco T."/>
            <person name="Kemp K."/>
            <person name="Kramer J."/>
            <person name="Fulton L."/>
            <person name="Mardis E."/>
            <person name="Dante M."/>
            <person name="Pepin K."/>
            <person name="Hillier L.W."/>
            <person name="Nelson J."/>
            <person name="Spieth J."/>
            <person name="Ryan E."/>
            <person name="Andrews S."/>
            <person name="Geisel C."/>
            <person name="Layman D."/>
            <person name="Du H."/>
            <person name="Ali J."/>
            <person name="Berghoff A."/>
            <person name="Jones K."/>
            <person name="Drone K."/>
            <person name="Cotton M."/>
            <person name="Joshu C."/>
            <person name="Antonoiu B."/>
            <person name="Zidanic M."/>
            <person name="Strong C."/>
            <person name="Sun H."/>
            <person name="Lamar B."/>
            <person name="Yordan C."/>
            <person name="Ma P."/>
            <person name="Zhong J."/>
            <person name="Preston R."/>
            <person name="Vil D."/>
            <person name="Shekher M."/>
            <person name="Matero A."/>
            <person name="Shah R."/>
            <person name="Swaby I.K."/>
            <person name="O'Shaughnessy A."/>
            <person name="Rodriguez M."/>
            <person name="Hoffman J."/>
            <person name="Till S."/>
            <person name="Granat S."/>
            <person name="Shohdy N."/>
            <person name="Hasegawa A."/>
            <person name="Hameed A."/>
            <person name="Lodhi M."/>
            <person name="Johnson A."/>
            <person name="Chen E."/>
            <person name="Marra M.A."/>
            <person name="Martienssen R."/>
            <person name="McCombie W.R."/>
        </authorList>
    </citation>
    <scope>NUCLEOTIDE SEQUENCE [LARGE SCALE GENOMIC DNA]</scope>
    <source>
        <strain>cv. Columbia</strain>
    </source>
</reference>
<reference key="3">
    <citation type="journal article" date="2017" name="Plant J.">
        <title>Araport11: a complete reannotation of the Arabidopsis thaliana reference genome.</title>
        <authorList>
            <person name="Cheng C.Y."/>
            <person name="Krishnakumar V."/>
            <person name="Chan A.P."/>
            <person name="Thibaud-Nissen F."/>
            <person name="Schobel S."/>
            <person name="Town C.D."/>
        </authorList>
    </citation>
    <scope>GENOME REANNOTATION</scope>
    <source>
        <strain>cv. Columbia</strain>
    </source>
</reference>
<reference key="4">
    <citation type="journal article" date="2003" name="Science">
        <title>Empirical analysis of transcriptional activity in the Arabidopsis genome.</title>
        <authorList>
            <person name="Yamada K."/>
            <person name="Lim J."/>
            <person name="Dale J.M."/>
            <person name="Chen H."/>
            <person name="Shinn P."/>
            <person name="Palm C.J."/>
            <person name="Southwick A.M."/>
            <person name="Wu H.C."/>
            <person name="Kim C.J."/>
            <person name="Nguyen M."/>
            <person name="Pham P.K."/>
            <person name="Cheuk R.F."/>
            <person name="Karlin-Newmann G."/>
            <person name="Liu S.X."/>
            <person name="Lam B."/>
            <person name="Sakano H."/>
            <person name="Wu T."/>
            <person name="Yu G."/>
            <person name="Miranda M."/>
            <person name="Quach H.L."/>
            <person name="Tripp M."/>
            <person name="Chang C.H."/>
            <person name="Lee J.M."/>
            <person name="Toriumi M.J."/>
            <person name="Chan M.M."/>
            <person name="Tang C.C."/>
            <person name="Onodera C.S."/>
            <person name="Deng J.M."/>
            <person name="Akiyama K."/>
            <person name="Ansari Y."/>
            <person name="Arakawa T."/>
            <person name="Banh J."/>
            <person name="Banno F."/>
            <person name="Bowser L."/>
            <person name="Brooks S.Y."/>
            <person name="Carninci P."/>
            <person name="Chao Q."/>
            <person name="Choy N."/>
            <person name="Enju A."/>
            <person name="Goldsmith A.D."/>
            <person name="Gurjal M."/>
            <person name="Hansen N.F."/>
            <person name="Hayashizaki Y."/>
            <person name="Johnson-Hopson C."/>
            <person name="Hsuan V.W."/>
            <person name="Iida K."/>
            <person name="Karnes M."/>
            <person name="Khan S."/>
            <person name="Koesema E."/>
            <person name="Ishida J."/>
            <person name="Jiang P.X."/>
            <person name="Jones T."/>
            <person name="Kawai J."/>
            <person name="Kamiya A."/>
            <person name="Meyers C."/>
            <person name="Nakajima M."/>
            <person name="Narusaka M."/>
            <person name="Seki M."/>
            <person name="Sakurai T."/>
            <person name="Satou M."/>
            <person name="Tamse R."/>
            <person name="Vaysberg M."/>
            <person name="Wallender E.K."/>
            <person name="Wong C."/>
            <person name="Yamamura Y."/>
            <person name="Yuan S."/>
            <person name="Shinozaki K."/>
            <person name="Davis R.W."/>
            <person name="Theologis A."/>
            <person name="Ecker J.R."/>
        </authorList>
    </citation>
    <scope>NUCLEOTIDE SEQUENCE [LARGE SCALE MRNA] (ISOFORM 1)</scope>
    <source>
        <strain>cv. Columbia</strain>
    </source>
</reference>
<reference key="5">
    <citation type="submission" date="2006-07" db="EMBL/GenBank/DDBJ databases">
        <title>Large-scale analysis of RIKEN Arabidopsis full-length (RAFL) cDNAs.</title>
        <authorList>
            <person name="Totoki Y."/>
            <person name="Seki M."/>
            <person name="Ishida J."/>
            <person name="Nakajima M."/>
            <person name="Enju A."/>
            <person name="Kamiya A."/>
            <person name="Narusaka M."/>
            <person name="Shin-i T."/>
            <person name="Nakagawa M."/>
            <person name="Sakamoto N."/>
            <person name="Oishi K."/>
            <person name="Kohara Y."/>
            <person name="Kobayashi M."/>
            <person name="Toyoda A."/>
            <person name="Sakaki Y."/>
            <person name="Sakurai T."/>
            <person name="Iida K."/>
            <person name="Akiyama K."/>
            <person name="Satou M."/>
            <person name="Toyoda T."/>
            <person name="Konagaya A."/>
            <person name="Carninci P."/>
            <person name="Kawai J."/>
            <person name="Hayashizaki Y."/>
            <person name="Shinozaki K."/>
        </authorList>
    </citation>
    <scope>NUCLEOTIDE SEQUENCE [LARGE SCALE MRNA] (ISOFORM 1)</scope>
    <source>
        <strain>cv. Columbia</strain>
    </source>
</reference>
<reference key="6">
    <citation type="journal article" date="2008" name="J. Proteome Res.">
        <title>Site-specific phosphorylation profiling of Arabidopsis proteins by mass spectrometry and peptide chip analysis.</title>
        <authorList>
            <person name="de la Fuente van Bentem S."/>
            <person name="Anrather D."/>
            <person name="Dohnal I."/>
            <person name="Roitinger E."/>
            <person name="Csaszar E."/>
            <person name="Joore J."/>
            <person name="Buijnink J."/>
            <person name="Carreri A."/>
            <person name="Forzani C."/>
            <person name="Lorkovic Z.J."/>
            <person name="Barta A."/>
            <person name="Lecourieux D."/>
            <person name="Verhounig A."/>
            <person name="Jonak C."/>
            <person name="Hirt H."/>
        </authorList>
    </citation>
    <scope>MASS SPECTROMETRY [LARGE SCALE ANALYSIS]</scope>
    <scope>PHOSPHORYLATION [LARGE SCALE ANALYSIS] AT SER-595</scope>
    <scope>IDENTIFICATION BY MASS SPECTROMETRY [LARGE SCALE ANALYSIS]</scope>
    <source>
        <tissue>Root</tissue>
    </source>
</reference>
<reference key="7">
    <citation type="journal article" date="2008" name="Plant Physiol.">
        <title>SUGAR-DEPENDENT6 encodes a mitochondrial flavin adenine dinucleotide-dependent glycerol-3-p dehydrogenase, which is required for glycerol catabolism and post germinative seedling growth in Arabidopsis.</title>
        <authorList>
            <person name="Quettier A.-L."/>
            <person name="Shaw E."/>
            <person name="Eastmond P.J."/>
        </authorList>
    </citation>
    <scope>ACTIVITY REGULATION</scope>
</reference>
<reference key="8">
    <citation type="journal article" date="2008" name="PLoS ONE">
        <title>Sorting signals, N-terminal modifications and abundance of the chloroplast proteome.</title>
        <authorList>
            <person name="Zybailov B."/>
            <person name="Rutschow H."/>
            <person name="Friso G."/>
            <person name="Rudella A."/>
            <person name="Emanuelsson O."/>
            <person name="Sun Q."/>
            <person name="van Wijk K.J."/>
        </authorList>
    </citation>
    <scope>IDENTIFICATION BY MASS SPECTROMETRY</scope>
    <scope>SUBCELLULAR LOCATION [LARGE SCALE ANALYSIS]</scope>
</reference>
<reference key="9">
    <citation type="journal article" date="2009" name="Plant Physiol.">
        <title>Large-scale Arabidopsis phosphoproteome profiling reveals novel chloroplast kinase substrates and phosphorylation networks.</title>
        <authorList>
            <person name="Reiland S."/>
            <person name="Messerli G."/>
            <person name="Baerenfaller K."/>
            <person name="Gerrits B."/>
            <person name="Endler A."/>
            <person name="Grossmann J."/>
            <person name="Gruissem W."/>
            <person name="Baginsky S."/>
        </authorList>
    </citation>
    <scope>PHOSPHORYLATION [LARGE SCALE ANALYSIS] AT SER-595</scope>
    <scope>IDENTIFICATION BY MASS SPECTROMETRY [LARGE SCALE ANALYSIS]</scope>
</reference>
<feature type="transit peptide" description="Chloroplast" evidence="2">
    <location>
        <begin position="1"/>
        <end position="48"/>
    </location>
</feature>
<feature type="chain" id="PRO_0000420249" description="Glucose-6-phosphate isomerase 1, chloroplastic">
    <location>
        <begin position="49"/>
        <end position="613"/>
    </location>
</feature>
<feature type="region of interest" description="Disordered" evidence="3">
    <location>
        <begin position="1"/>
        <end position="21"/>
    </location>
</feature>
<feature type="compositionally biased region" description="Low complexity" evidence="3">
    <location>
        <begin position="1"/>
        <end position="14"/>
    </location>
</feature>
<feature type="active site" description="Proton donor" evidence="1">
    <location>
        <position position="392"/>
    </location>
</feature>
<feature type="active site" evidence="1">
    <location>
        <position position="421"/>
    </location>
</feature>
<feature type="active site" evidence="1">
    <location>
        <position position="526"/>
    </location>
</feature>
<feature type="modified residue" description="Phosphoserine" evidence="8 9">
    <location>
        <position position="595"/>
    </location>
</feature>
<feature type="splice variant" id="VSP_044431" description="In isoform 2." evidence="7">
    <original>I</original>
    <variation>K</variation>
    <location>
        <position position="570"/>
    </location>
</feature>
<feature type="splice variant" id="VSP_044432" description="In isoform 2." evidence="7">
    <location>
        <begin position="571"/>
        <end position="613"/>
    </location>
</feature>
<feature type="mutagenesis site" description="In pgi1-1; decreased plastid phospho-glucose (Glc) isomerase activity leading to a deficiency in leaf starch synthesis, but an accumulation of starch in root cap cells. Delayed flowering time under short-day conditions." evidence="4">
    <original>S</original>
    <variation>F</variation>
    <location>
        <position position="166"/>
    </location>
</feature>
<feature type="sequence conflict" description="In Ref. 1; AAF24124." evidence="7" ref="1">
    <original>ALPAQSRDSFSFPHTSKPTNLP</original>
    <variation>GIAGAISRFLLFPTYLQTHQST</variation>
    <location>
        <begin position="24"/>
        <end position="45"/>
    </location>
</feature>
<feature type="sequence conflict" description="In Ref. 1; AAF24124." evidence="7" ref="1">
    <original>FVAEALA</original>
    <variation>LSLRLG</variation>
    <location>
        <begin position="201"/>
        <end position="207"/>
    </location>
</feature>
<feature type="sequence conflict" description="In Ref. 1; AAF24124." evidence="7" ref="1">
    <original>A</original>
    <variation>H</variation>
    <location>
        <position position="321"/>
    </location>
</feature>
<feature type="sequence conflict" description="In Ref. 1; AAF24124." evidence="7" ref="1">
    <original>A</original>
    <variation>P</variation>
    <location>
        <position position="422"/>
    </location>
</feature>
<feature type="sequence conflict" description="In Ref. 1; AAF24124." evidence="7" ref="1">
    <original>D</original>
    <variation>Y</variation>
    <location>
        <position position="444"/>
    </location>
</feature>
<gene>
    <name type="primary">PGI1</name>
    <name type="synonym">pgi2</name>
    <name type="synonym">pgi3</name>
    <name type="ordered locus">At4g24620</name>
    <name type="ORF">F22K18.180</name>
</gene>
<sequence>MASLSGLYSSSPSLKPAKNHSFKALPAQSRDSFSFPHTSKPTNLPLTLSSARSVARDISHADSKKELLKDPDALWKRYLDWFYQQKELGLYLDISRVGFTDEFVAEMEPRFQAAFKAMEDLEKGSIANPDEGRMVGHYWLRNSKLAPKPTLKTLIENTLDSICAFSDDIISGKIKPPSSPEGRFTQILSVGIGGSALGPQFVAEALAPDNPPLKIRFIDNTDPAGIDHQIAQLGPELASTLVVVISKSGGTPETRNGLLEVQKAFREAGLNFAKQGVAITQENSLLDNTARIEGWLARFPMYDWVGGRTSIMSAVGLLPAALQGINVREMLTGAALMDEATRTTSIKNNPAALLAMCWYWASNGVGSKDMVVLPYKDSLLLFSRYLQQLVMESLGKEFDLDGNTVNQGLTVYGNKGSTDQHAYIQQLRDGVHNFFATFIEVLRDRPPGHDWELEPGVTCGDYLFGMLQGTRSALYANGRESISVTIQEVTPTSVGAIIALYERAVGLYASIVNINAYHQPGVEAGKKAAAEVLALQKRVLSVLNEATCKDPVEPLTLEEIADRCHAPEEIEMIYKIIAHMSANDRVLIAEGNCGSPRSIKVYLGECNVDDLYA</sequence>
<organism>
    <name type="scientific">Arabidopsis thaliana</name>
    <name type="common">Mouse-ear cress</name>
    <dbReference type="NCBI Taxonomy" id="3702"/>
    <lineage>
        <taxon>Eukaryota</taxon>
        <taxon>Viridiplantae</taxon>
        <taxon>Streptophyta</taxon>
        <taxon>Embryophyta</taxon>
        <taxon>Tracheophyta</taxon>
        <taxon>Spermatophyta</taxon>
        <taxon>Magnoliopsida</taxon>
        <taxon>eudicotyledons</taxon>
        <taxon>Gunneridae</taxon>
        <taxon>Pentapetalae</taxon>
        <taxon>rosids</taxon>
        <taxon>malvids</taxon>
        <taxon>Brassicales</taxon>
        <taxon>Brassicaceae</taxon>
        <taxon>Camelineae</taxon>
        <taxon>Arabidopsis</taxon>
    </lineage>
</organism>
<accession>Q8H103</accession>
<accession>A8MR16</accession>
<accession>Q9SB57</accession>
<accession>Q9SEJ5</accession>
<protein>
    <recommendedName>
        <fullName>Glucose-6-phosphate isomerase 1, chloroplastic</fullName>
        <shortName>GPI 1</shortName>
        <ecNumber>5.3.1.9</ecNumber>
    </recommendedName>
    <alternativeName>
        <fullName>Phosphoglucose isomerase 1</fullName>
        <shortName>PGI 1</shortName>
    </alternativeName>
    <alternativeName>
        <fullName>Phosphohexose isomerase</fullName>
        <shortName>PHI</shortName>
    </alternativeName>
</protein>
<dbReference type="EC" id="5.3.1.9"/>
<dbReference type="EMBL" id="AF120494">
    <property type="protein sequence ID" value="AAF24124.1"/>
    <property type="molecule type" value="Genomic_DNA"/>
</dbReference>
<dbReference type="EMBL" id="AL035356">
    <property type="protein sequence ID" value="CAA23001.1"/>
    <property type="status" value="ALT_SEQ"/>
    <property type="molecule type" value="Genomic_DNA"/>
</dbReference>
<dbReference type="EMBL" id="AL161561">
    <property type="protein sequence ID" value="CAB79372.1"/>
    <property type="status" value="ALT_SEQ"/>
    <property type="molecule type" value="Genomic_DNA"/>
</dbReference>
<dbReference type="EMBL" id="CP002687">
    <property type="protein sequence ID" value="AEE84933.1"/>
    <property type="molecule type" value="Genomic_DNA"/>
</dbReference>
<dbReference type="EMBL" id="CP002687">
    <property type="protein sequence ID" value="AEE84934.1"/>
    <property type="molecule type" value="Genomic_DNA"/>
</dbReference>
<dbReference type="EMBL" id="BT000953">
    <property type="protein sequence ID" value="AAN41353.1"/>
    <property type="molecule type" value="mRNA"/>
</dbReference>
<dbReference type="EMBL" id="AK227111">
    <property type="protein sequence ID" value="BAE99162.1"/>
    <property type="molecule type" value="mRNA"/>
</dbReference>
<dbReference type="PIR" id="T05572">
    <property type="entry name" value="T05572"/>
</dbReference>
<dbReference type="RefSeq" id="NP_001078444.1">
    <molecule id="Q8H103-2"/>
    <property type="nucleotide sequence ID" value="NM_001084975.1"/>
</dbReference>
<dbReference type="RefSeq" id="NP_194193.2">
    <molecule id="Q8H103-1"/>
    <property type="nucleotide sequence ID" value="NM_118595.5"/>
</dbReference>
<dbReference type="SMR" id="Q8H103"/>
<dbReference type="BioGRID" id="13853">
    <property type="interactions" value="13"/>
</dbReference>
<dbReference type="FunCoup" id="Q8H103">
    <property type="interactions" value="949"/>
</dbReference>
<dbReference type="STRING" id="3702.Q8H103"/>
<dbReference type="iPTMnet" id="Q8H103"/>
<dbReference type="MetOSite" id="Q8H103"/>
<dbReference type="PaxDb" id="3702-AT4G24620.1"/>
<dbReference type="ProteomicsDB" id="230022">
    <molecule id="Q8H103-1"/>
</dbReference>
<dbReference type="EnsemblPlants" id="AT4G24620.1">
    <molecule id="Q8H103-1"/>
    <property type="protein sequence ID" value="AT4G24620.1"/>
    <property type="gene ID" value="AT4G24620"/>
</dbReference>
<dbReference type="EnsemblPlants" id="AT4G24620.2">
    <molecule id="Q8H103-2"/>
    <property type="protein sequence ID" value="AT4G24620.2"/>
    <property type="gene ID" value="AT4G24620"/>
</dbReference>
<dbReference type="GeneID" id="828564"/>
<dbReference type="Gramene" id="AT4G24620.1">
    <molecule id="Q8H103-1"/>
    <property type="protein sequence ID" value="AT4G24620.1"/>
    <property type="gene ID" value="AT4G24620"/>
</dbReference>
<dbReference type="Gramene" id="AT4G24620.2">
    <molecule id="Q8H103-2"/>
    <property type="protein sequence ID" value="AT4G24620.2"/>
    <property type="gene ID" value="AT4G24620"/>
</dbReference>
<dbReference type="KEGG" id="ath:AT4G24620"/>
<dbReference type="Araport" id="AT4G24620"/>
<dbReference type="TAIR" id="AT4G24620">
    <property type="gene designation" value="PGI1"/>
</dbReference>
<dbReference type="eggNOG" id="KOG2446">
    <property type="taxonomic scope" value="Eukaryota"/>
</dbReference>
<dbReference type="HOGENOM" id="CLU_033288_0_0_1"/>
<dbReference type="InParanoid" id="Q8H103"/>
<dbReference type="OMA" id="AICNFAD"/>
<dbReference type="OrthoDB" id="5831190at2759"/>
<dbReference type="PhylomeDB" id="Q8H103"/>
<dbReference type="BioCyc" id="ARA:AT4G24620-MONOMER"/>
<dbReference type="BioCyc" id="MetaCyc:AT4G24620-MONOMER"/>
<dbReference type="UniPathway" id="UPA00109">
    <property type="reaction ID" value="UER00181"/>
</dbReference>
<dbReference type="UniPathway" id="UPA00138"/>
<dbReference type="CD-CODE" id="4299E36E">
    <property type="entry name" value="Nucleolus"/>
</dbReference>
<dbReference type="PRO" id="PR:Q8H103"/>
<dbReference type="Proteomes" id="UP000006548">
    <property type="component" value="Chromosome 4"/>
</dbReference>
<dbReference type="ExpressionAtlas" id="Q8H103">
    <property type="expression patterns" value="baseline and differential"/>
</dbReference>
<dbReference type="GO" id="GO:0009507">
    <property type="term" value="C:chloroplast"/>
    <property type="evidence" value="ECO:0007005"/>
    <property type="project" value="TAIR"/>
</dbReference>
<dbReference type="GO" id="GO:0009941">
    <property type="term" value="C:chloroplast envelope"/>
    <property type="evidence" value="ECO:0007005"/>
    <property type="project" value="TAIR"/>
</dbReference>
<dbReference type="GO" id="GO:0009570">
    <property type="term" value="C:chloroplast stroma"/>
    <property type="evidence" value="ECO:0007005"/>
    <property type="project" value="TAIR"/>
</dbReference>
<dbReference type="GO" id="GO:0005829">
    <property type="term" value="C:cytosol"/>
    <property type="evidence" value="ECO:0007005"/>
    <property type="project" value="TAIR"/>
</dbReference>
<dbReference type="GO" id="GO:0009536">
    <property type="term" value="C:plastid"/>
    <property type="evidence" value="ECO:0000250"/>
    <property type="project" value="TAIR"/>
</dbReference>
<dbReference type="GO" id="GO:0097367">
    <property type="term" value="F:carbohydrate derivative binding"/>
    <property type="evidence" value="ECO:0007669"/>
    <property type="project" value="InterPro"/>
</dbReference>
<dbReference type="GO" id="GO:0004347">
    <property type="term" value="F:glucose-6-phosphate isomerase activity"/>
    <property type="evidence" value="ECO:0000250"/>
    <property type="project" value="TAIR"/>
</dbReference>
<dbReference type="GO" id="GO:0006094">
    <property type="term" value="P:gluconeogenesis"/>
    <property type="evidence" value="ECO:0007669"/>
    <property type="project" value="UniProtKB-UniPathway"/>
</dbReference>
<dbReference type="GO" id="GO:0006096">
    <property type="term" value="P:glycolytic process"/>
    <property type="evidence" value="ECO:0007669"/>
    <property type="project" value="UniProtKB-UniPathway"/>
</dbReference>
<dbReference type="GO" id="GO:0009911">
    <property type="term" value="P:positive regulation of flower development"/>
    <property type="evidence" value="ECO:0000315"/>
    <property type="project" value="TAIR"/>
</dbReference>
<dbReference type="GO" id="GO:0005982">
    <property type="term" value="P:starch metabolic process"/>
    <property type="evidence" value="ECO:0000315"/>
    <property type="project" value="TAIR"/>
</dbReference>
<dbReference type="CDD" id="cd05015">
    <property type="entry name" value="SIS_PGI_1"/>
    <property type="match status" value="1"/>
</dbReference>
<dbReference type="CDD" id="cd05016">
    <property type="entry name" value="SIS_PGI_2"/>
    <property type="match status" value="1"/>
</dbReference>
<dbReference type="FunFam" id="3.40.50.10490:FF:000021">
    <property type="entry name" value="Glucose-6-phosphate isomerase"/>
    <property type="match status" value="1"/>
</dbReference>
<dbReference type="FunFam" id="3.40.50.10490:FF:000023">
    <property type="entry name" value="Glucose-6-phosphate isomerase"/>
    <property type="match status" value="1"/>
</dbReference>
<dbReference type="Gene3D" id="3.40.50.10490">
    <property type="entry name" value="Glucose-6-phosphate isomerase like protein, domain 1"/>
    <property type="match status" value="2"/>
</dbReference>
<dbReference type="HAMAP" id="MF_00473">
    <property type="entry name" value="G6P_isomerase"/>
    <property type="match status" value="1"/>
</dbReference>
<dbReference type="InterPro" id="IPR001672">
    <property type="entry name" value="G6P_Isomerase"/>
</dbReference>
<dbReference type="InterPro" id="IPR018189">
    <property type="entry name" value="Phosphoglucose_isomerase_CS"/>
</dbReference>
<dbReference type="InterPro" id="IPR046348">
    <property type="entry name" value="SIS_dom_sf"/>
</dbReference>
<dbReference type="InterPro" id="IPR035476">
    <property type="entry name" value="SIS_PGI_1"/>
</dbReference>
<dbReference type="InterPro" id="IPR035482">
    <property type="entry name" value="SIS_PGI_2"/>
</dbReference>
<dbReference type="NCBIfam" id="NF010696">
    <property type="entry name" value="PRK14096.1"/>
    <property type="match status" value="1"/>
</dbReference>
<dbReference type="PANTHER" id="PTHR11469">
    <property type="entry name" value="GLUCOSE-6-PHOSPHATE ISOMERASE"/>
    <property type="match status" value="1"/>
</dbReference>
<dbReference type="PANTHER" id="PTHR11469:SF1">
    <property type="entry name" value="GLUCOSE-6-PHOSPHATE ISOMERASE"/>
    <property type="match status" value="1"/>
</dbReference>
<dbReference type="Pfam" id="PF00342">
    <property type="entry name" value="PGI"/>
    <property type="match status" value="2"/>
</dbReference>
<dbReference type="PRINTS" id="PR00662">
    <property type="entry name" value="G6PISOMERASE"/>
</dbReference>
<dbReference type="SUPFAM" id="SSF53697">
    <property type="entry name" value="SIS domain"/>
    <property type="match status" value="1"/>
</dbReference>
<dbReference type="PROSITE" id="PS00174">
    <property type="entry name" value="P_GLUCOSE_ISOMERASE_2"/>
    <property type="match status" value="1"/>
</dbReference>
<dbReference type="PROSITE" id="PS51463">
    <property type="entry name" value="P_GLUCOSE_ISOMERASE_3"/>
    <property type="match status" value="1"/>
</dbReference>
<keyword id="KW-0025">Alternative splicing</keyword>
<keyword id="KW-0150">Chloroplast</keyword>
<keyword id="KW-0312">Gluconeogenesis</keyword>
<keyword id="KW-0324">Glycolysis</keyword>
<keyword id="KW-0413">Isomerase</keyword>
<keyword id="KW-0597">Phosphoprotein</keyword>
<keyword id="KW-0934">Plastid</keyword>
<keyword id="KW-1185">Reference proteome</keyword>
<keyword id="KW-0809">Transit peptide</keyword>
<comment type="function">
    <text evidence="4">Promotes the synthesis of starch in leaves.</text>
</comment>
<comment type="catalytic activity">
    <reaction>
        <text>alpha-D-glucose 6-phosphate = beta-D-fructose 6-phosphate</text>
        <dbReference type="Rhea" id="RHEA:11816"/>
        <dbReference type="ChEBI" id="CHEBI:57634"/>
        <dbReference type="ChEBI" id="CHEBI:58225"/>
        <dbReference type="EC" id="5.3.1.9"/>
    </reaction>
</comment>
<comment type="activity regulation">
    <text evidence="6">Inhibited by glycerol-3-P (G3P).</text>
</comment>
<comment type="pathway">
    <text>Carbohydrate degradation; glycolysis; D-glyceraldehyde 3-phosphate and glycerone phosphate from D-glucose: step 2/4.</text>
</comment>
<comment type="pathway">
    <text>Carbohydrate biosynthesis; gluconeogenesis.</text>
</comment>
<comment type="subcellular location">
    <subcellularLocation>
        <location evidence="5">Plastid</location>
        <location evidence="5">Chloroplast stroma</location>
    </subcellularLocation>
</comment>
<comment type="alternative products">
    <event type="alternative splicing"/>
    <isoform>
        <id>Q8H103-1</id>
        <name>1</name>
        <sequence type="displayed"/>
    </isoform>
    <isoform>
        <id>Q8H103-2</id>
        <name>2</name>
        <sequence type="described" ref="VSP_044431 VSP_044432"/>
    </isoform>
</comment>
<comment type="similarity">
    <text evidence="7">Belongs to the GPI family.</text>
</comment>
<comment type="sequence caution" evidence="7">
    <conflict type="erroneous gene model prediction">
        <sequence resource="EMBL-CDS" id="CAA23001"/>
    </conflict>
</comment>
<comment type="sequence caution" evidence="7">
    <conflict type="erroneous gene model prediction">
        <sequence resource="EMBL-CDS" id="CAB79372"/>
    </conflict>
</comment>
<evidence type="ECO:0000250" key="1"/>
<evidence type="ECO:0000255" key="2"/>
<evidence type="ECO:0000256" key="3">
    <source>
        <dbReference type="SAM" id="MobiDB-lite"/>
    </source>
</evidence>
<evidence type="ECO:0000269" key="4">
    <source>
    </source>
</evidence>
<evidence type="ECO:0000269" key="5">
    <source>
    </source>
</evidence>
<evidence type="ECO:0000269" key="6">
    <source>
    </source>
</evidence>
<evidence type="ECO:0000305" key="7"/>
<evidence type="ECO:0007744" key="8">
    <source>
    </source>
</evidence>
<evidence type="ECO:0007744" key="9">
    <source>
    </source>
</evidence>
<name>G6PIP_ARATH</name>